<reference key="1">
    <citation type="submission" date="2003-03" db="EMBL/GenBank/DDBJ databases">
        <title>African swine fever virus genomes.</title>
        <authorList>
            <person name="Kutish G.F."/>
            <person name="Rock D.L."/>
        </authorList>
    </citation>
    <scope>NUCLEOTIDE SEQUENCE [LARGE SCALE GENOMIC DNA]</scope>
</reference>
<name>VF448_ASFWA</name>
<comment type="subcellular location">
    <subcellularLocation>
        <location evidence="1">Virion</location>
    </subcellularLocation>
</comment>
<comment type="induction">
    <text evidence="2">Expressed in the early phase of the viral replicative cycle.</text>
</comment>
<comment type="similarity">
    <text evidence="2">Belongs to the asfivirus M448R family.</text>
</comment>
<organism>
    <name type="scientific">African swine fever virus (isolate Warthog/Namibia/Wart80/1980)</name>
    <name type="common">ASFV</name>
    <dbReference type="NCBI Taxonomy" id="561444"/>
    <lineage>
        <taxon>Viruses</taxon>
        <taxon>Varidnaviria</taxon>
        <taxon>Bamfordvirae</taxon>
        <taxon>Nucleocytoviricota</taxon>
        <taxon>Pokkesviricetes</taxon>
        <taxon>Asfuvirales</taxon>
        <taxon>Asfarviridae</taxon>
        <taxon>Asfivirus</taxon>
        <taxon>African swine fever virus</taxon>
    </lineage>
</organism>
<evidence type="ECO:0000250" key="1">
    <source>
        <dbReference type="UniProtKB" id="Q65153"/>
    </source>
</evidence>
<evidence type="ECO:0000305" key="2"/>
<proteinExistence type="inferred from homology"/>
<gene>
    <name type="ordered locus">War-071</name>
</gene>
<accession>P0CAH6</accession>
<sequence>MSNESFPETLENLLSTLQTKQQNAIQSEVIEWLHNFCETFHLKIHCHKQFIPSGEKKRAKIPAQETQGNTQPSHHVHRIVLSRAQPVKAQESLLTTMCNGLVLDANTWTCLAIPPPAPFQQATRQVQHFYRNNFYEVVPIQDGTLLTIYYWDDPEHGPSWCLASTHGYDVSNYCWIGDKTFAELVYELLQQHSTCDVTLEKNKTRGTRLFFNNLNPDYCYTIGIRHHNLQPLIYDPQNIWAIQSTNLKTLKTVYPEYYGYIGIPGIQSQVPELPQYDLPYLIRSYKTAMNQAKNAIKNGKKDKGYFNYGYLLISRAPAITKSTSNVLLKSPLLVFLQKSVYQKKHNISNSQRLEFIILQNYLMQHFRDHFIALFPQYISYYTKYQNMLNMIINSIATKDKDHPFAGAVVKKVLEDIENAENIIDHTTIQNYVHQSKYAMLYLSIISHF</sequence>
<keyword id="KW-0244">Early protein</keyword>
<keyword id="KW-0946">Virion</keyword>
<feature type="chain" id="PRO_0000373694" description="Uncharacterized protein M448R">
    <location>
        <begin position="1"/>
        <end position="448"/>
    </location>
</feature>
<dbReference type="EMBL" id="AY261366">
    <property type="status" value="NOT_ANNOTATED_CDS"/>
    <property type="molecule type" value="Genomic_DNA"/>
</dbReference>
<dbReference type="SMR" id="P0CAH6"/>
<dbReference type="Proteomes" id="UP000000858">
    <property type="component" value="Segment"/>
</dbReference>
<dbReference type="GO" id="GO:0044423">
    <property type="term" value="C:virion component"/>
    <property type="evidence" value="ECO:0007669"/>
    <property type="project" value="UniProtKB-KW"/>
</dbReference>
<organismHost>
    <name type="scientific">Ornithodoros</name>
    <name type="common">relapsing fever ticks</name>
    <dbReference type="NCBI Taxonomy" id="6937"/>
</organismHost>
<organismHost>
    <name type="scientific">Phacochoerus aethiopicus</name>
    <name type="common">Warthog</name>
    <dbReference type="NCBI Taxonomy" id="85517"/>
</organismHost>
<organismHost>
    <name type="scientific">Phacochoerus africanus</name>
    <name type="common">Warthog</name>
    <dbReference type="NCBI Taxonomy" id="41426"/>
</organismHost>
<organismHost>
    <name type="scientific">Potamochoerus larvatus</name>
    <name type="common">Bushpig</name>
    <dbReference type="NCBI Taxonomy" id="273792"/>
</organismHost>
<organismHost>
    <name type="scientific">Sus scrofa</name>
    <name type="common">Pig</name>
    <dbReference type="NCBI Taxonomy" id="9823"/>
</organismHost>
<protein>
    <recommendedName>
        <fullName>Uncharacterized protein M448R</fullName>
        <shortName>pM448R</shortName>
    </recommendedName>
</protein>